<evidence type="ECO:0000250" key="1">
    <source>
        <dbReference type="UniProtKB" id="Q5T200"/>
    </source>
</evidence>
<evidence type="ECO:0000255" key="2"/>
<evidence type="ECO:0000255" key="3">
    <source>
        <dbReference type="PROSITE-ProRule" id="PRU00723"/>
    </source>
</evidence>
<evidence type="ECO:0000256" key="4">
    <source>
        <dbReference type="SAM" id="MobiDB-lite"/>
    </source>
</evidence>
<evidence type="ECO:0000269" key="5">
    <source>
    </source>
</evidence>
<evidence type="ECO:0000269" key="6">
    <source>
    </source>
</evidence>
<evidence type="ECO:0000303" key="7">
    <source>
    </source>
</evidence>
<evidence type="ECO:0000303" key="8">
    <source>
    </source>
</evidence>
<evidence type="ECO:0000305" key="9"/>
<evidence type="ECO:0000312" key="10">
    <source>
        <dbReference type="MGI" id="MGI:1914552"/>
    </source>
</evidence>
<evidence type="ECO:0007744" key="11">
    <source>
    </source>
</evidence>
<evidence type="ECO:0007744" key="12">
    <source>
    </source>
</evidence>
<protein>
    <recommendedName>
        <fullName evidence="9">Zinc finger CCCH domain-containing protein 13</fullName>
    </recommendedName>
</protein>
<sequence>MSKIRRKVTVENTKTISESTSRRPSVFERLGPSTGSTTETQCRNWLKTGSCLYGNTCRFIHGPSPRGKGYSSNYRRSPERPTGDLRERMKNKRQDVDSESQKRNTEEPSSPVRKESSRGRHRDKEDIKIVKERTPESEEENVEWETNRDDSDNGDINYDYVHELSLEMKRQKIQRELMKLEQENMDKREEIIIQKEVSPEVVRSKLSPSPSLRKSSKSPKRKSSPKASSAGKKERKAAVVASPLLDQQRNSKGNQSKKKGPRTPSPPPPILEDIILGKKYKEKYKVKDRIEEKPRDGKDRGRDFEKQREKRDKPRSSSPGQHHSPLSSRHHSSSSQSGSSIQRHSPSPRRKRTPSPSYQRTLTPSLRRSASPYPTHCLSSPQRKQSPPRHRSPMREKGRHDHERTSQSHDRRHERREETRGKRDREKDTREERESEHDHRDDREPRDSRDRRDTRDRRELRDSRDMRDSREMRDYSRDAKESRDPRDSRSARDVHDYRDREARDAHARDVRDARDARDARDARDIRDVRDVRDVRDVRDVRDVRDVRDVRDVRDARDVRDVRDARDVRDVRDVRDGHRKEDVYQEEARSYGRNHLREESSRVELRNDSRNESRSEIRNDRMGRSRGRGPELPEKGSRGTRGSQMDSHSSGSNYHDSWETRSSYPERDRYPERDTRDPARDSSFERRHGERDRRDNRERDQRPSSPIRHQGRSEELERDERREERRIDRVDERRDDRVRDRDRDREREREREREREREREKERERELERERAREREREREKERERERERERDQRDRDHDREREREREREREKEREREREERERERERERERERERERERERERERERERERAREREKERERQREWEDKDKGRDDRREKREDIHVREDRIPRDSHEERKSKKRYRNEGSPSPRQSPKRRREHSPDSDTYHSGDDKNEKHRLLSQVVRPQESRSLSPSHLTEDRQGRWKEEDRKSERKESSRRYEEQELKEKLSCGDRQREQAESVDSSRVRAQDLLSHRQAEDRDRDGSDRAHDEKKKAKAPKKPVKKKKEEDVGVERGNLETHEDSQVFSPKKGQKKKNIEKKRKRSKGDSDVSDEEAAPQNKKKRGPRTPPLAIKEELADISTDKDGVLEDPLKKENTAFSDWSDEDVPDRTEGLEAEHTAATATPGSTPSPLSSLLPPPPPVAAASTAATALASSAVSATTSATSSSSAATSNTNGSEDSHRKCHRARGEKVEVSHVTLEDTPHRKLVDQKRSSSLGSNRSHRSHTSGRLRSPSNDSAHRSGDDQGSRKRVLHSGSRDREKTKSLEITGERKSRIDQLKRGEPSRSTSSDRQDSRSHSSRRSSPESDRQVHSRSGSFDSRDRLQERDRYEHDRERERDRRDPRQREWDREAEKEWPRTRDRDRLRERDRDRDRRRDLDRERERLISDPMERDRERERTFETSQLESGKRSEVKLESEHERDLEGSSRDSVALDKERMDRDLGSVQGFEDVSKAERTESLEGDDESKLDDAHSLGSGAGEGYEPISDDELDEILAGDAEKREDQQEEEKMPDPLDVIDVDWSGLMPKHPKEPREPGAALLKFTPGAVLLRVGISKKLAGSELFTKVKETCQQLVEKPKDADSLFEHELGALNMAALLRKEERASLLSDLGPCCKALCFRRDSAIRKQLVKNEKGTVKQAYTNTPMVDNELLRLSLRLFKKKATCHAPGQEKTEDGKLGPCSIQQELCVS</sequence>
<gene>
    <name evidence="7 8 10" type="primary">Zc3h13</name>
</gene>
<comment type="function">
    <text evidence="5 6">Associated component of the WMM complex, a complex that mediates N6-methyladenosine (m6A) methylation of RNAs, a modification that plays a role in the efficiency of mRNA splicing and RNA processing (PubMed:29535189, PubMed:29547716). Acts as a key regulator of m6A methylation by promoting m6A methylation of mRNAs at the 3'-UTR (PubMed:29547716). Controls embryonic stem cells (ESCs) pluripotency via its role in m6A methylation (PubMed:29547716). In the WMM complex, anchors component of the MACOM subcomplex in the nucleus (PubMed:29547716). Also required for bridging WTAP to the RNA-binding component RBM15 (RBM15 or RBM15B) (PubMed:29535189).</text>
</comment>
<comment type="subunit">
    <text evidence="1 5 6">Component of the WMM complex, a N6-methyltransferase complex composed of a catalytic subcomplex, named MAC, and of an associated subcomplex, named MACOM (PubMed:29535189, PubMed:29547716). The MAC subcomplex is composed of METTL3 and METTL14 (PubMed:29535189, PubMed:29547716). The MACOM subcomplex is composed of WTAP, ZC3H13, CBLL1/HAKAI, VIRMA, and, in some cases of RBM15 (RBM15 or RBM15B) (PubMed:29535189, PubMed:29547716). Also a component of a MACOM-like complex, named WTAP complex, composed of WTAP, ZC3H13, CBLL1/HAKAI, VIRMA, RBM15, BCLAF1 and THRAP3 (By similarity).</text>
</comment>
<comment type="subcellular location">
    <subcellularLocation>
        <location evidence="1">Nucleus speckle</location>
    </subcellularLocation>
    <subcellularLocation>
        <location evidence="6">Nucleus</location>
        <location evidence="6">Nucleoplasm</location>
    </subcellularLocation>
</comment>
<comment type="similarity">
    <text evidence="9">Belongs to the ZC3H13 family.</text>
</comment>
<proteinExistence type="evidence at protein level"/>
<name>ZC3HD_MOUSE</name>
<reference key="1">
    <citation type="journal article" date="2009" name="PLoS Biol.">
        <title>Lineage-specific biology revealed by a finished genome assembly of the mouse.</title>
        <authorList>
            <person name="Church D.M."/>
            <person name="Goodstadt L."/>
            <person name="Hillier L.W."/>
            <person name="Zody M.C."/>
            <person name="Goldstein S."/>
            <person name="She X."/>
            <person name="Bult C.J."/>
            <person name="Agarwala R."/>
            <person name="Cherry J.L."/>
            <person name="DiCuccio M."/>
            <person name="Hlavina W."/>
            <person name="Kapustin Y."/>
            <person name="Meric P."/>
            <person name="Maglott D."/>
            <person name="Birtle Z."/>
            <person name="Marques A.C."/>
            <person name="Graves T."/>
            <person name="Zhou S."/>
            <person name="Teague B."/>
            <person name="Potamousis K."/>
            <person name="Churas C."/>
            <person name="Place M."/>
            <person name="Herschleb J."/>
            <person name="Runnheim R."/>
            <person name="Forrest D."/>
            <person name="Amos-Landgraf J."/>
            <person name="Schwartz D.C."/>
            <person name="Cheng Z."/>
            <person name="Lindblad-Toh K."/>
            <person name="Eichler E.E."/>
            <person name="Ponting C.P."/>
        </authorList>
    </citation>
    <scope>NUCLEOTIDE SEQUENCE [LARGE SCALE GENOMIC DNA]</scope>
    <source>
        <strain>C57BL/6J</strain>
    </source>
</reference>
<reference key="2">
    <citation type="journal article" date="2004" name="Genome Res.">
        <title>The status, quality, and expansion of the NIH full-length cDNA project: the Mammalian Gene Collection (MGC).</title>
        <authorList>
            <consortium name="The MGC Project Team"/>
        </authorList>
    </citation>
    <scope>NUCLEOTIDE SEQUENCE [LARGE SCALE MRNA]</scope>
    <source>
        <tissue>Brain</tissue>
    </source>
</reference>
<reference key="3">
    <citation type="journal article" date="2009" name="Mol. Cell. Proteomics">
        <title>Large scale localization of protein phosphorylation by use of electron capture dissociation mass spectrometry.</title>
        <authorList>
            <person name="Sweet S.M."/>
            <person name="Bailey C.M."/>
            <person name="Cunningham D.L."/>
            <person name="Heath J.K."/>
            <person name="Cooper H.J."/>
        </authorList>
    </citation>
    <scope>PHOSPHORYLATION [LARGE SCALE ANALYSIS] AT SER-242; THR-263 AND SER-265</scope>
    <scope>IDENTIFICATION BY MASS SPECTROMETRY [LARGE SCALE ANALYSIS]</scope>
    <source>
        <tissue>Embryonic fibroblast</tissue>
    </source>
</reference>
<reference key="4">
    <citation type="journal article" date="2010" name="Cell">
        <title>A tissue-specific atlas of mouse protein phosphorylation and expression.</title>
        <authorList>
            <person name="Huttlin E.L."/>
            <person name="Jedrychowski M.P."/>
            <person name="Elias J.E."/>
            <person name="Goswami T."/>
            <person name="Rad R."/>
            <person name="Beausoleil S.A."/>
            <person name="Villen J."/>
            <person name="Haas W."/>
            <person name="Sowa M.E."/>
            <person name="Gygi S.P."/>
        </authorList>
    </citation>
    <scope>PHOSPHORYLATION [LARGE SCALE ANALYSIS] AT SER-198; SER-207; SER-242; THR-263; SER-907; SER-909; SER-913; SER-953; SER-1069; SER-1086; SER-1090 AND SER-1093</scope>
    <scope>IDENTIFICATION BY MASS SPECTROMETRY [LARGE SCALE ANALYSIS]</scope>
    <source>
        <tissue>Brain</tissue>
        <tissue>Brown adipose tissue</tissue>
        <tissue>Kidney</tissue>
        <tissue>Liver</tissue>
        <tissue>Lung</tissue>
        <tissue>Pancreas</tissue>
        <tissue>Spleen</tissue>
        <tissue>Testis</tissue>
    </source>
</reference>
<reference key="5">
    <citation type="journal article" date="2018" name="Genes Dev.">
        <title>Zc3h13/Flacc is required for adenosine methylation by bridging the mRNA-binding factor Rbm15/Spenito to the m6A machinery component Wtap/Fl(2)d.</title>
        <authorList>
            <person name="Knuckles P."/>
            <person name="Lence T."/>
            <person name="Haussmann I.U."/>
            <person name="Jacob D."/>
            <person name="Kreim N."/>
            <person name="Carl S.H."/>
            <person name="Masiello I."/>
            <person name="Hares T."/>
            <person name="Villasenor R."/>
            <person name="Hess D."/>
            <person name="Andrade-Navarro M.A."/>
            <person name="Biggiogera M."/>
            <person name="Helm M."/>
            <person name="Soller M."/>
            <person name="Buehler M."/>
            <person name="Roignant J.Y."/>
        </authorList>
    </citation>
    <scope>FUNCTION</scope>
    <scope>IDENTIFICATION IN THE WMM COMPLEX</scope>
</reference>
<reference key="6">
    <citation type="journal article" date="2018" name="Mol. Cell">
        <title>Zc3h13 regulates nuclear RNA m6A methylation and mouse embryonic stem cell self-renewal.</title>
        <authorList>
            <person name="Wen J."/>
            <person name="Lv R."/>
            <person name="Ma H."/>
            <person name="Shen H."/>
            <person name="He C."/>
            <person name="Wang J."/>
            <person name="Jiao F."/>
            <person name="Liu H."/>
            <person name="Yang P."/>
            <person name="Tan L."/>
            <person name="Lan F."/>
            <person name="Shi Y.G."/>
            <person name="He C."/>
            <person name="Shi Y."/>
            <person name="Diao J."/>
        </authorList>
    </citation>
    <scope>FUNCTION</scope>
    <scope>SUBCELLULAR LOCATION</scope>
    <scope>IDENTIFICATION IN THE WMM COMPLEX</scope>
</reference>
<accession>E9Q784</accession>
<accession>B9EHN9</accession>
<feature type="chain" id="PRO_0000434521" description="Zinc finger CCCH domain-containing protein 13">
    <location>
        <begin position="1"/>
        <end position="1729"/>
    </location>
</feature>
<feature type="zinc finger region" description="C3H1-type" evidence="3">
    <location>
        <begin position="36"/>
        <end position="64"/>
    </location>
</feature>
<feature type="region of interest" description="Disordered" evidence="4">
    <location>
        <begin position="1"/>
        <end position="40"/>
    </location>
</feature>
<feature type="region of interest" description="Disordered" evidence="4">
    <location>
        <begin position="57"/>
        <end position="156"/>
    </location>
</feature>
<feature type="region of interest" description="Disordered" evidence="4">
    <location>
        <begin position="182"/>
        <end position="528"/>
    </location>
</feature>
<feature type="region of interest" description="Disordered" evidence="4">
    <location>
        <begin position="581"/>
        <end position="1527"/>
    </location>
</feature>
<feature type="coiled-coil region" evidence="2">
    <location>
        <begin position="162"/>
        <end position="196"/>
    </location>
</feature>
<feature type="coiled-coil region" evidence="2">
    <location>
        <begin position="706"/>
        <end position="865"/>
    </location>
</feature>
<feature type="compositionally biased region" description="Polar residues" evidence="4">
    <location>
        <begin position="10"/>
        <end position="23"/>
    </location>
</feature>
<feature type="compositionally biased region" description="Basic and acidic residues" evidence="4">
    <location>
        <begin position="76"/>
        <end position="136"/>
    </location>
</feature>
<feature type="compositionally biased region" description="Basic and acidic residues" evidence="4">
    <location>
        <begin position="182"/>
        <end position="193"/>
    </location>
</feature>
<feature type="compositionally biased region" description="Low complexity" evidence="4">
    <location>
        <begin position="204"/>
        <end position="213"/>
    </location>
</feature>
<feature type="compositionally biased region" description="Basic residues" evidence="4">
    <location>
        <begin position="214"/>
        <end position="224"/>
    </location>
</feature>
<feature type="compositionally biased region" description="Polar residues" evidence="4">
    <location>
        <begin position="245"/>
        <end position="254"/>
    </location>
</feature>
<feature type="compositionally biased region" description="Basic and acidic residues" evidence="4">
    <location>
        <begin position="283"/>
        <end position="315"/>
    </location>
</feature>
<feature type="compositionally biased region" description="Low complexity" evidence="4">
    <location>
        <begin position="321"/>
        <end position="345"/>
    </location>
</feature>
<feature type="compositionally biased region" description="Polar residues" evidence="4">
    <location>
        <begin position="358"/>
        <end position="368"/>
    </location>
</feature>
<feature type="compositionally biased region" description="Basic and acidic residues" evidence="4">
    <location>
        <begin position="393"/>
        <end position="528"/>
    </location>
</feature>
<feature type="compositionally biased region" description="Basic and acidic residues" evidence="4">
    <location>
        <begin position="581"/>
        <end position="636"/>
    </location>
</feature>
<feature type="compositionally biased region" description="Polar residues" evidence="4">
    <location>
        <begin position="639"/>
        <end position="654"/>
    </location>
</feature>
<feature type="compositionally biased region" description="Basic and acidic residues" evidence="4">
    <location>
        <begin position="655"/>
        <end position="701"/>
    </location>
</feature>
<feature type="compositionally biased region" description="Basic and acidic residues" evidence="4">
    <location>
        <begin position="710"/>
        <end position="897"/>
    </location>
</feature>
<feature type="compositionally biased region" description="Basic and acidic residues" evidence="4">
    <location>
        <begin position="920"/>
        <end position="938"/>
    </location>
</feature>
<feature type="compositionally biased region" description="Basic and acidic residues" evidence="4">
    <location>
        <begin position="957"/>
        <end position="1035"/>
    </location>
</feature>
<feature type="compositionally biased region" description="Basic residues" evidence="4">
    <location>
        <begin position="1036"/>
        <end position="1046"/>
    </location>
</feature>
<feature type="compositionally biased region" description="Basic and acidic residues" evidence="4">
    <location>
        <begin position="1047"/>
        <end position="1065"/>
    </location>
</feature>
<feature type="compositionally biased region" description="Basic residues" evidence="4">
    <location>
        <begin position="1072"/>
        <end position="1086"/>
    </location>
</feature>
<feature type="compositionally biased region" description="Basic and acidic residues" evidence="4">
    <location>
        <begin position="1114"/>
        <end position="1137"/>
    </location>
</feature>
<feature type="compositionally biased region" description="Basic and acidic residues" evidence="4">
    <location>
        <begin position="1149"/>
        <end position="1159"/>
    </location>
</feature>
<feature type="compositionally biased region" description="Low complexity" evidence="4">
    <location>
        <begin position="1160"/>
        <end position="1176"/>
    </location>
</feature>
<feature type="compositionally biased region" description="Low complexity" evidence="4">
    <location>
        <begin position="1184"/>
        <end position="1218"/>
    </location>
</feature>
<feature type="compositionally biased region" description="Basic and acidic residues" evidence="4">
    <location>
        <begin position="1228"/>
        <end position="1253"/>
    </location>
</feature>
<feature type="compositionally biased region" description="Basic and acidic residues" evidence="4">
    <location>
        <begin position="1278"/>
        <end position="1288"/>
    </location>
</feature>
<feature type="compositionally biased region" description="Basic and acidic residues" evidence="4">
    <location>
        <begin position="1296"/>
        <end position="1351"/>
    </location>
</feature>
<feature type="compositionally biased region" description="Basic and acidic residues" evidence="4">
    <location>
        <begin position="1359"/>
        <end position="1440"/>
    </location>
</feature>
<feature type="compositionally biased region" description="Basic and acidic residues" evidence="4">
    <location>
        <begin position="1447"/>
        <end position="1482"/>
    </location>
</feature>
<feature type="compositionally biased region" description="Basic and acidic residues" evidence="4">
    <location>
        <begin position="1490"/>
        <end position="1499"/>
    </location>
</feature>
<feature type="modified residue" description="Phosphoserine" evidence="1">
    <location>
        <position position="64"/>
    </location>
</feature>
<feature type="modified residue" description="Phosphoserine" evidence="1">
    <location>
        <position position="77"/>
    </location>
</feature>
<feature type="modified residue" description="Phosphoserine" evidence="12">
    <location>
        <position position="198"/>
    </location>
</feature>
<feature type="modified residue" description="Phosphoserine" evidence="12">
    <location>
        <position position="207"/>
    </location>
</feature>
<feature type="modified residue" description="Phosphoserine" evidence="1">
    <location>
        <position position="209"/>
    </location>
</feature>
<feature type="modified residue" description="Phosphoserine" evidence="1">
    <location>
        <position position="211"/>
    </location>
</feature>
<feature type="modified residue" description="Phosphoserine" evidence="11 12">
    <location>
        <position position="242"/>
    </location>
</feature>
<feature type="modified residue" description="Phosphothreonine" evidence="11 12">
    <location>
        <position position="263"/>
    </location>
</feature>
<feature type="modified residue" description="Phosphoserine" evidence="11">
    <location>
        <position position="265"/>
    </location>
</feature>
<feature type="modified residue" description="Phosphoserine" evidence="1">
    <location>
        <position position="316"/>
    </location>
</feature>
<feature type="modified residue" description="Phosphoserine" evidence="1">
    <location>
        <position position="318"/>
    </location>
</feature>
<feature type="modified residue" description="Phosphoserine" evidence="1">
    <location>
        <position position="324"/>
    </location>
</feature>
<feature type="modified residue" description="Phosphoserine" evidence="1">
    <location>
        <position position="327"/>
    </location>
</feature>
<feature type="modified residue" description="Phosphothreonine" evidence="1">
    <location>
        <position position="353"/>
    </location>
</feature>
<feature type="modified residue" description="Phosphothreonine" evidence="1">
    <location>
        <position position="363"/>
    </location>
</feature>
<feature type="modified residue" description="Phosphoserine" evidence="1">
    <location>
        <position position="369"/>
    </location>
</feature>
<feature type="modified residue" description="Phosphoserine" evidence="1">
    <location>
        <position position="371"/>
    </location>
</feature>
<feature type="modified residue" description="Phosphoserine" evidence="1">
    <location>
        <position position="380"/>
    </location>
</feature>
<feature type="modified residue" description="Phosphoserine" evidence="1">
    <location>
        <position position="704"/>
    </location>
</feature>
<feature type="modified residue" description="Phosphoserine" evidence="12">
    <location>
        <position position="907"/>
    </location>
</feature>
<feature type="modified residue" description="Phosphoserine" evidence="12">
    <location>
        <position position="909"/>
    </location>
</feature>
<feature type="modified residue" description="Phosphoserine" evidence="12">
    <location>
        <position position="913"/>
    </location>
</feature>
<feature type="modified residue" description="Phosphoserine" evidence="1">
    <location>
        <position position="921"/>
    </location>
</feature>
<feature type="modified residue" description="Phosphoserine" evidence="1">
    <location>
        <position position="924"/>
    </location>
</feature>
<feature type="modified residue" description="Phosphoserine" evidence="1">
    <location>
        <position position="929"/>
    </location>
</feature>
<feature type="modified residue" description="Phosphoserine" evidence="1">
    <location>
        <position position="949"/>
    </location>
</feature>
<feature type="modified residue" description="Phosphoserine" evidence="1">
    <location>
        <position position="951"/>
    </location>
</feature>
<feature type="modified residue" description="Phosphoserine" evidence="12">
    <location>
        <position position="953"/>
    </location>
</feature>
<feature type="modified residue" description="Phosphothreonine" evidence="1">
    <location>
        <position position="958"/>
    </location>
</feature>
<feature type="modified residue" description="Phosphoserine" evidence="12">
    <location>
        <position position="1069"/>
    </location>
</feature>
<feature type="modified residue" description="Phosphoserine" evidence="12">
    <location>
        <position position="1086"/>
    </location>
</feature>
<feature type="modified residue" description="Phosphoserine" evidence="12">
    <location>
        <position position="1090"/>
    </location>
</feature>
<feature type="modified residue" description="Phosphoserine" evidence="12">
    <location>
        <position position="1093"/>
    </location>
</feature>
<feature type="modified residue" description="Phosphothreonine" evidence="1">
    <location>
        <position position="1109"/>
    </location>
</feature>
<feature type="modified residue" description="Phosphoserine" evidence="1">
    <location>
        <position position="1256"/>
    </location>
</feature>
<feature type="modified residue" description="Phosphoserine" evidence="1">
    <location>
        <position position="1259"/>
    </location>
</feature>
<feature type="modified residue" description="Phosphoserine" evidence="1">
    <location>
        <position position="1273"/>
    </location>
</feature>
<feature type="modified residue" description="Phosphoserine" evidence="1">
    <location>
        <position position="1275"/>
    </location>
</feature>
<feature type="modified residue" description="Phosphoserine" evidence="1">
    <location>
        <position position="1295"/>
    </location>
</feature>
<feature type="modified residue" description="Phosphoserine" evidence="1">
    <location>
        <position position="1427"/>
    </location>
</feature>
<feature type="modified residue" description="Phosphoserine" evidence="1">
    <location>
        <position position="1443"/>
    </location>
</feature>
<feature type="modified residue" description="Phosphoserine" evidence="1">
    <location>
        <position position="1447"/>
    </location>
</feature>
<feature type="modified residue" description="Phosphoserine" evidence="1">
    <location>
        <position position="1467"/>
    </location>
</feature>
<feature type="modified residue" description="Phosphoserine" evidence="1">
    <location>
        <position position="1470"/>
    </location>
</feature>
<feature type="modified residue" description="Phosphoserine" evidence="1">
    <location>
        <position position="1499"/>
    </location>
</feature>
<feature type="modified residue" description="Phosphoserine" evidence="1">
    <location>
        <position position="1526"/>
    </location>
</feature>
<feature type="cross-link" description="Glycyl lysine isopeptide (Lys-Gly) (interchain with G-Cter in SUMO2)" evidence="1">
    <location>
        <position position="179"/>
    </location>
</feature>
<feature type="sequence conflict" description="In Ref. 2; AAI38265." evidence="9" ref="2">
    <original>E</original>
    <variation>EA</variation>
    <location>
        <position position="1501"/>
    </location>
</feature>
<organism>
    <name type="scientific">Mus musculus</name>
    <name type="common">Mouse</name>
    <dbReference type="NCBI Taxonomy" id="10090"/>
    <lineage>
        <taxon>Eukaryota</taxon>
        <taxon>Metazoa</taxon>
        <taxon>Chordata</taxon>
        <taxon>Craniata</taxon>
        <taxon>Vertebrata</taxon>
        <taxon>Euteleostomi</taxon>
        <taxon>Mammalia</taxon>
        <taxon>Eutheria</taxon>
        <taxon>Euarchontoglires</taxon>
        <taxon>Glires</taxon>
        <taxon>Rodentia</taxon>
        <taxon>Myomorpha</taxon>
        <taxon>Muroidea</taxon>
        <taxon>Muridae</taxon>
        <taxon>Murinae</taxon>
        <taxon>Mus</taxon>
        <taxon>Mus</taxon>
    </lineage>
</organism>
<keyword id="KW-0175">Coiled coil</keyword>
<keyword id="KW-0217">Developmental protein</keyword>
<keyword id="KW-1017">Isopeptide bond</keyword>
<keyword id="KW-0479">Metal-binding</keyword>
<keyword id="KW-0507">mRNA processing</keyword>
<keyword id="KW-0508">mRNA splicing</keyword>
<keyword id="KW-0539">Nucleus</keyword>
<keyword id="KW-0597">Phosphoprotein</keyword>
<keyword id="KW-1185">Reference proteome</keyword>
<keyword id="KW-0677">Repeat</keyword>
<keyword id="KW-0832">Ubl conjugation</keyword>
<keyword id="KW-0862">Zinc</keyword>
<keyword id="KW-0863">Zinc-finger</keyword>
<dbReference type="EMBL" id="AC161877">
    <property type="status" value="NOT_ANNOTATED_CDS"/>
    <property type="molecule type" value="Genomic_DNA"/>
</dbReference>
<dbReference type="EMBL" id="BC138264">
    <property type="protein sequence ID" value="AAI38265.1"/>
    <property type="molecule type" value="mRNA"/>
</dbReference>
<dbReference type="CCDS" id="CCDS27278.1"/>
<dbReference type="RefSeq" id="NP_080359.2">
    <property type="nucleotide sequence ID" value="NM_026083.2"/>
</dbReference>
<dbReference type="RefSeq" id="XP_006519508.1">
    <property type="nucleotide sequence ID" value="XM_006519445.3"/>
</dbReference>
<dbReference type="RefSeq" id="XP_006519509.1">
    <property type="nucleotide sequence ID" value="XM_006519446.3"/>
</dbReference>
<dbReference type="RefSeq" id="XP_006519510.1">
    <property type="nucleotide sequence ID" value="XM_006519447.5"/>
</dbReference>
<dbReference type="ComplexPortal" id="CPX-1609">
    <property type="entry name" value="WMM N6-adenosine-methyltransferase complex"/>
</dbReference>
<dbReference type="CORUM" id="E9Q784"/>
<dbReference type="DIP" id="DIP-58951N"/>
<dbReference type="FunCoup" id="E9Q784">
    <property type="interactions" value="3754"/>
</dbReference>
<dbReference type="IntAct" id="E9Q784">
    <property type="interactions" value="1"/>
</dbReference>
<dbReference type="STRING" id="10090.ENSMUSP00000022577"/>
<dbReference type="GlyGen" id="E9Q784">
    <property type="glycosylation" value="2 sites"/>
</dbReference>
<dbReference type="iPTMnet" id="E9Q784"/>
<dbReference type="PhosphoSitePlus" id="E9Q784"/>
<dbReference type="jPOST" id="E9Q784"/>
<dbReference type="PaxDb" id="10090-ENSMUSP00000022577"/>
<dbReference type="ProteomicsDB" id="275270"/>
<dbReference type="Pumba" id="E9Q784"/>
<dbReference type="Antibodypedia" id="23654">
    <property type="antibodies" value="105 antibodies from 22 providers"/>
</dbReference>
<dbReference type="DNASU" id="67302"/>
<dbReference type="Ensembl" id="ENSMUST00000022577.6">
    <property type="protein sequence ID" value="ENSMUSP00000022577.6"/>
    <property type="gene ID" value="ENSMUSG00000022000.12"/>
</dbReference>
<dbReference type="GeneID" id="67302"/>
<dbReference type="KEGG" id="mmu:67302"/>
<dbReference type="UCSC" id="uc007uqs.1">
    <property type="organism name" value="mouse"/>
</dbReference>
<dbReference type="UCSC" id="uc007uqt.2">
    <property type="organism name" value="mouse"/>
</dbReference>
<dbReference type="AGR" id="MGI:1914552"/>
<dbReference type="CTD" id="23091"/>
<dbReference type="MGI" id="MGI:1914552">
    <property type="gene designation" value="Zc3h13"/>
</dbReference>
<dbReference type="VEuPathDB" id="HostDB:ENSMUSG00000022000"/>
<dbReference type="eggNOG" id="KOG1874">
    <property type="taxonomic scope" value="Eukaryota"/>
</dbReference>
<dbReference type="GeneTree" id="ENSGT00730000111163"/>
<dbReference type="HOGENOM" id="CLU_003683_0_0_1"/>
<dbReference type="InParanoid" id="E9Q784"/>
<dbReference type="OrthoDB" id="6022762at2759"/>
<dbReference type="TreeFam" id="TF332670"/>
<dbReference type="BioGRID-ORCS" id="67302">
    <property type="hits" value="10 hits in 76 CRISPR screens"/>
</dbReference>
<dbReference type="ChiTaRS" id="Zc3h13">
    <property type="organism name" value="mouse"/>
</dbReference>
<dbReference type="PRO" id="PR:E9Q784"/>
<dbReference type="Proteomes" id="UP000000589">
    <property type="component" value="Chromosome 14"/>
</dbReference>
<dbReference type="RNAct" id="E9Q784">
    <property type="molecule type" value="protein"/>
</dbReference>
<dbReference type="Bgee" id="ENSMUSG00000022000">
    <property type="expression patterns" value="Expressed in rostral migratory stream and 230 other cell types or tissues"/>
</dbReference>
<dbReference type="ExpressionAtlas" id="E9Q784">
    <property type="expression patterns" value="baseline and differential"/>
</dbReference>
<dbReference type="GO" id="GO:0016607">
    <property type="term" value="C:nuclear speck"/>
    <property type="evidence" value="ECO:0000314"/>
    <property type="project" value="UniProtKB"/>
</dbReference>
<dbReference type="GO" id="GO:0005654">
    <property type="term" value="C:nucleoplasm"/>
    <property type="evidence" value="ECO:0000250"/>
    <property type="project" value="UniProtKB"/>
</dbReference>
<dbReference type="GO" id="GO:0005634">
    <property type="term" value="C:nucleus"/>
    <property type="evidence" value="ECO:0000303"/>
    <property type="project" value="ComplexPortal"/>
</dbReference>
<dbReference type="GO" id="GO:0036396">
    <property type="term" value="C:RNA N6-methyladenosine methyltransferase complex"/>
    <property type="evidence" value="ECO:0000314"/>
    <property type="project" value="UniProtKB"/>
</dbReference>
<dbReference type="GO" id="GO:0008270">
    <property type="term" value="F:zinc ion binding"/>
    <property type="evidence" value="ECO:0007669"/>
    <property type="project" value="UniProtKB-KW"/>
</dbReference>
<dbReference type="GO" id="GO:0006397">
    <property type="term" value="P:mRNA processing"/>
    <property type="evidence" value="ECO:0007669"/>
    <property type="project" value="UniProtKB-KW"/>
</dbReference>
<dbReference type="GO" id="GO:2000036">
    <property type="term" value="P:regulation of stem cell population maintenance"/>
    <property type="evidence" value="ECO:0000315"/>
    <property type="project" value="UniProtKB"/>
</dbReference>
<dbReference type="GO" id="GO:0008380">
    <property type="term" value="P:RNA splicing"/>
    <property type="evidence" value="ECO:0007669"/>
    <property type="project" value="UniProtKB-KW"/>
</dbReference>
<dbReference type="Gene3D" id="4.10.1000.10">
    <property type="entry name" value="Zinc finger, CCCH-type"/>
    <property type="match status" value="1"/>
</dbReference>
<dbReference type="InterPro" id="IPR052824">
    <property type="entry name" value="m6A_RNA_Methylation_Regulator"/>
</dbReference>
<dbReference type="InterPro" id="IPR000571">
    <property type="entry name" value="Znf_CCCH"/>
</dbReference>
<dbReference type="InterPro" id="IPR036855">
    <property type="entry name" value="Znf_CCCH_sf"/>
</dbReference>
<dbReference type="PANTHER" id="PTHR13585">
    <property type="entry name" value="CHASCON, ISOFORM D-RELATED"/>
    <property type="match status" value="1"/>
</dbReference>
<dbReference type="PANTHER" id="PTHR13585:SF19">
    <property type="entry name" value="ZINC FINGER CCCH DOMAIN-CONTAINING PROTEIN 13"/>
    <property type="match status" value="1"/>
</dbReference>
<dbReference type="Pfam" id="PF00642">
    <property type="entry name" value="zf-CCCH"/>
    <property type="match status" value="1"/>
</dbReference>
<dbReference type="SMART" id="SM00356">
    <property type="entry name" value="ZnF_C3H1"/>
    <property type="match status" value="1"/>
</dbReference>
<dbReference type="SUPFAM" id="SSF90229">
    <property type="entry name" value="CCCH zinc finger"/>
    <property type="match status" value="1"/>
</dbReference>
<dbReference type="PROSITE" id="PS50103">
    <property type="entry name" value="ZF_C3H1"/>
    <property type="match status" value="1"/>
</dbReference>